<feature type="chain" id="PRO_0000304789" description="GPN-loop GTPase 3">
    <location>
        <begin position="1"/>
        <end position="284"/>
    </location>
</feature>
<feature type="region of interest" description="Disordered" evidence="3">
    <location>
        <begin position="261"/>
        <end position="284"/>
    </location>
</feature>
<feature type="short sequence motif" description="Gly-Pro-Asn (GPN)-loop; involved in dimer interface" evidence="2">
    <location>
        <begin position="72"/>
        <end position="74"/>
    </location>
</feature>
<feature type="binding site" evidence="2">
    <location>
        <begin position="13"/>
        <end position="18"/>
    </location>
    <ligand>
        <name>GTP</name>
        <dbReference type="ChEBI" id="CHEBI:37565"/>
    </ligand>
</feature>
<feature type="binding site" evidence="2">
    <location>
        <begin position="174"/>
        <end position="177"/>
    </location>
    <ligand>
        <name>GTP</name>
        <dbReference type="ChEBI" id="CHEBI:37565"/>
    </ligand>
</feature>
<feature type="site" description="Stabilizes the phosphate intermediate; shared with dimeric partner" evidence="2">
    <location>
        <position position="74"/>
    </location>
</feature>
<comment type="function">
    <text evidence="1">Small GTPase required for proper localization of RNA polymerase II (RNAPII). May act at an RNAP assembly step prior to nuclear import.</text>
</comment>
<comment type="subunit">
    <text evidence="1">Heterodimer with GPN1. Binds to RNA polymerase II (RNAPII). Interacts directly with subunits RPB4 and RPB7 and the CTD of RPB1.</text>
</comment>
<comment type="similarity">
    <text evidence="4">Belongs to the GPN-loop GTPase family.</text>
</comment>
<gene>
    <name evidence="1" type="primary">GPN3</name>
    <name evidence="1" type="synonym">ATPBD1C</name>
</gene>
<name>GPN3_BOVIN</name>
<sequence length="284" mass="32691">MPRYAQLVMGPAGSGKSTYCATMVQHCEALNRSVQVVNLDPAAEHFNYSVMADIRELIEVDDVMEDSTLQFGPNGGLVFCMEYFANNFDWLENCLGHVEDDYILFDCPGQIELYTHLPVMKQLVQQLEQWEFRVCGVFLVDSQFMVESFKFISGILAALSAMISLEIPQVNVMTKMDLLSKKAKKEIEKFLDPDMYSLLDDSTSDLRSKKFKKLTNAICGLIDDYSMVRFLPYDQSDEESMNIVLQHIDFAIQYGEDLEFKEPKEHEDESSSMFDEYFQEHQNE</sequence>
<protein>
    <recommendedName>
        <fullName evidence="1">GPN-loop GTPase 3</fullName>
    </recommendedName>
    <alternativeName>
        <fullName evidence="1">ATP-binding domain 1 family member C</fullName>
    </alternativeName>
</protein>
<reference key="1">
    <citation type="submission" date="2006-08" db="EMBL/GenBank/DDBJ databases">
        <authorList>
            <consortium name="NIH - Mammalian Gene Collection (MGC) project"/>
        </authorList>
    </citation>
    <scope>NUCLEOTIDE SEQUENCE [LARGE SCALE MRNA]</scope>
    <source>
        <strain>Hereford</strain>
        <tissue>Thymus</tissue>
    </source>
</reference>
<accession>Q0P5E2</accession>
<proteinExistence type="evidence at transcript level"/>
<dbReference type="EMBL" id="BC120171">
    <property type="protein sequence ID" value="AAI20172.1"/>
    <property type="molecule type" value="mRNA"/>
</dbReference>
<dbReference type="RefSeq" id="NP_001068740.1">
    <property type="nucleotide sequence ID" value="NM_001075272.2"/>
</dbReference>
<dbReference type="SMR" id="Q0P5E2"/>
<dbReference type="FunCoup" id="Q0P5E2">
    <property type="interactions" value="3793"/>
</dbReference>
<dbReference type="STRING" id="9913.ENSBTAP00000007032"/>
<dbReference type="PaxDb" id="9913-ENSBTAP00000007032"/>
<dbReference type="Ensembl" id="ENSBTAT00000007032.6">
    <property type="protein sequence ID" value="ENSBTAP00000007032.5"/>
    <property type="gene ID" value="ENSBTAG00000005347.7"/>
</dbReference>
<dbReference type="GeneID" id="506597"/>
<dbReference type="KEGG" id="bta:506597"/>
<dbReference type="CTD" id="51184"/>
<dbReference type="VEuPathDB" id="HostDB:ENSBTAG00000005347"/>
<dbReference type="VGNC" id="VGNC:29540">
    <property type="gene designation" value="GPN3"/>
</dbReference>
<dbReference type="eggNOG" id="KOG1534">
    <property type="taxonomic scope" value="Eukaryota"/>
</dbReference>
<dbReference type="GeneTree" id="ENSGT00950000183172"/>
<dbReference type="HOGENOM" id="CLU_037460_0_0_1"/>
<dbReference type="InParanoid" id="Q0P5E2"/>
<dbReference type="OMA" id="LYTHMTV"/>
<dbReference type="OrthoDB" id="5839at2759"/>
<dbReference type="TreeFam" id="TF105810"/>
<dbReference type="Proteomes" id="UP000009136">
    <property type="component" value="Chromosome 17"/>
</dbReference>
<dbReference type="Bgee" id="ENSBTAG00000005347">
    <property type="expression patterns" value="Expressed in oocyte and 105 other cell types or tissues"/>
</dbReference>
<dbReference type="GO" id="GO:0005525">
    <property type="term" value="F:GTP binding"/>
    <property type="evidence" value="ECO:0007669"/>
    <property type="project" value="UniProtKB-KW"/>
</dbReference>
<dbReference type="GO" id="GO:0003924">
    <property type="term" value="F:GTPase activity"/>
    <property type="evidence" value="ECO:0000318"/>
    <property type="project" value="GO_Central"/>
</dbReference>
<dbReference type="CDD" id="cd17872">
    <property type="entry name" value="GPN3"/>
    <property type="match status" value="1"/>
</dbReference>
<dbReference type="FunFam" id="3.40.50.300:FF:000616">
    <property type="entry name" value="GPN-loop GTPase 3"/>
    <property type="match status" value="1"/>
</dbReference>
<dbReference type="Gene3D" id="3.40.50.300">
    <property type="entry name" value="P-loop containing nucleotide triphosphate hydrolases"/>
    <property type="match status" value="1"/>
</dbReference>
<dbReference type="InterPro" id="IPR004130">
    <property type="entry name" value="Gpn"/>
</dbReference>
<dbReference type="InterPro" id="IPR030228">
    <property type="entry name" value="Gpn3"/>
</dbReference>
<dbReference type="InterPro" id="IPR027417">
    <property type="entry name" value="P-loop_NTPase"/>
</dbReference>
<dbReference type="PANTHER" id="PTHR21231:SF7">
    <property type="entry name" value="GPN-LOOP GTPASE 3"/>
    <property type="match status" value="1"/>
</dbReference>
<dbReference type="PANTHER" id="PTHR21231">
    <property type="entry name" value="XPA-BINDING PROTEIN 1-RELATED"/>
    <property type="match status" value="1"/>
</dbReference>
<dbReference type="Pfam" id="PF03029">
    <property type="entry name" value="ATP_bind_1"/>
    <property type="match status" value="1"/>
</dbReference>
<dbReference type="SUPFAM" id="SSF52540">
    <property type="entry name" value="P-loop containing nucleoside triphosphate hydrolases"/>
    <property type="match status" value="1"/>
</dbReference>
<keyword id="KW-0342">GTP-binding</keyword>
<keyword id="KW-0378">Hydrolase</keyword>
<keyword id="KW-0547">Nucleotide-binding</keyword>
<keyword id="KW-1185">Reference proteome</keyword>
<organism>
    <name type="scientific">Bos taurus</name>
    <name type="common">Bovine</name>
    <dbReference type="NCBI Taxonomy" id="9913"/>
    <lineage>
        <taxon>Eukaryota</taxon>
        <taxon>Metazoa</taxon>
        <taxon>Chordata</taxon>
        <taxon>Craniata</taxon>
        <taxon>Vertebrata</taxon>
        <taxon>Euteleostomi</taxon>
        <taxon>Mammalia</taxon>
        <taxon>Eutheria</taxon>
        <taxon>Laurasiatheria</taxon>
        <taxon>Artiodactyla</taxon>
        <taxon>Ruminantia</taxon>
        <taxon>Pecora</taxon>
        <taxon>Bovidae</taxon>
        <taxon>Bovinae</taxon>
        <taxon>Bos</taxon>
    </lineage>
</organism>
<evidence type="ECO:0000250" key="1">
    <source>
        <dbReference type="UniProtKB" id="Q9UHW5"/>
    </source>
</evidence>
<evidence type="ECO:0000250" key="2">
    <source>
        <dbReference type="UniProtKB" id="Q9UYR9"/>
    </source>
</evidence>
<evidence type="ECO:0000256" key="3">
    <source>
        <dbReference type="SAM" id="MobiDB-lite"/>
    </source>
</evidence>
<evidence type="ECO:0000305" key="4"/>